<proteinExistence type="inferred from homology"/>
<organism>
    <name type="scientific">Rickettsia conorii (strain ATCC VR-613 / Malish 7)</name>
    <dbReference type="NCBI Taxonomy" id="272944"/>
    <lineage>
        <taxon>Bacteria</taxon>
        <taxon>Pseudomonadati</taxon>
        <taxon>Pseudomonadota</taxon>
        <taxon>Alphaproteobacteria</taxon>
        <taxon>Rickettsiales</taxon>
        <taxon>Rickettsiaceae</taxon>
        <taxon>Rickettsieae</taxon>
        <taxon>Rickettsia</taxon>
        <taxon>spotted fever group</taxon>
    </lineage>
</organism>
<sequence>MIKIYFIAGEVSGDFVGGRIMQHLKNNTGVQLNSPVSSFVNDAVQFVGVGGKYMEEAGSFKSLFPITSINLMGFVEILPHIFKLKKLIDKTVEDIINSKADLLITIDSPGFTYRVAKRVRKLLPKLKMIHIVAPSVWAYKEGRAVKYAKIYDCLFALLPFEPPYFTKVGLDCRYIGHPIMEQEFYSDKIALREEFKIDENERVLCVTLGSRKGEILRHLSVFVSSIEEIFKSCNNLKVIFTLANPAHEAIIKPFLEDVKFNYLFSSERLKIYAVADVALAKSGTNTLEIAASGTPMIVAYKVNLISFFIIRLLIKIKYVTLINIIADKEIIPEFIQFNCRANLISNKLQELLFNSKKAYEQVIESQKILQQLGFKSNRLQLNSESFRHDEFKGKLARCTKVREHRLSLENSLVSSDRDDAVPSYIAAAIIKQEFLEPKIKLLKEKD</sequence>
<evidence type="ECO:0000250" key="1"/>
<evidence type="ECO:0000305" key="2"/>
<gene>
    <name type="primary">lpxB</name>
    <name type="ordered locus">RC0440</name>
</gene>
<reference key="1">
    <citation type="journal article" date="2001" name="Science">
        <title>Mechanisms of evolution in Rickettsia conorii and R. prowazekii.</title>
        <authorList>
            <person name="Ogata H."/>
            <person name="Audic S."/>
            <person name="Renesto-Audiffren P."/>
            <person name="Fournier P.-E."/>
            <person name="Barbe V."/>
            <person name="Samson D."/>
            <person name="Roux V."/>
            <person name="Cossart P."/>
            <person name="Weissenbach J."/>
            <person name="Claverie J.-M."/>
            <person name="Raoult D."/>
        </authorList>
    </citation>
    <scope>NUCLEOTIDE SEQUENCE [LARGE SCALE GENOMIC DNA]</scope>
    <source>
        <strain>ATCC VR-613 / Malish 7</strain>
    </source>
</reference>
<dbReference type="EC" id="2.4.1.182"/>
<dbReference type="EMBL" id="AE006914">
    <property type="protein sequence ID" value="AAL02978.1"/>
    <property type="molecule type" value="Genomic_DNA"/>
</dbReference>
<dbReference type="PIR" id="H97754">
    <property type="entry name" value="H97754"/>
</dbReference>
<dbReference type="RefSeq" id="WP_010977087.1">
    <property type="nucleotide sequence ID" value="NC_003103.1"/>
</dbReference>
<dbReference type="SMR" id="Q92II0"/>
<dbReference type="CAZy" id="GT19">
    <property type="family name" value="Glycosyltransferase Family 19"/>
</dbReference>
<dbReference type="GeneID" id="928676"/>
<dbReference type="KEGG" id="rco:RC0440"/>
<dbReference type="PATRIC" id="fig|272944.4.peg.498"/>
<dbReference type="HOGENOM" id="CLU_036577_2_0_5"/>
<dbReference type="UniPathway" id="UPA00973"/>
<dbReference type="Proteomes" id="UP000000816">
    <property type="component" value="Chromosome"/>
</dbReference>
<dbReference type="GO" id="GO:0016020">
    <property type="term" value="C:membrane"/>
    <property type="evidence" value="ECO:0007669"/>
    <property type="project" value="GOC"/>
</dbReference>
<dbReference type="GO" id="GO:0008915">
    <property type="term" value="F:lipid-A-disaccharide synthase activity"/>
    <property type="evidence" value="ECO:0007669"/>
    <property type="project" value="UniProtKB-UniRule"/>
</dbReference>
<dbReference type="GO" id="GO:0005543">
    <property type="term" value="F:phospholipid binding"/>
    <property type="evidence" value="ECO:0007669"/>
    <property type="project" value="TreeGrafter"/>
</dbReference>
<dbReference type="GO" id="GO:0009245">
    <property type="term" value="P:lipid A biosynthetic process"/>
    <property type="evidence" value="ECO:0007669"/>
    <property type="project" value="UniProtKB-UniRule"/>
</dbReference>
<dbReference type="Gene3D" id="3.40.50.2000">
    <property type="entry name" value="Glycogen Phosphorylase B"/>
    <property type="match status" value="1"/>
</dbReference>
<dbReference type="HAMAP" id="MF_00392">
    <property type="entry name" value="LpxB"/>
    <property type="match status" value="1"/>
</dbReference>
<dbReference type="InterPro" id="IPR003835">
    <property type="entry name" value="Glyco_trans_19"/>
</dbReference>
<dbReference type="InterPro" id="IPR022437">
    <property type="entry name" value="RPE3"/>
</dbReference>
<dbReference type="NCBIfam" id="TIGR00215">
    <property type="entry name" value="lpxB"/>
    <property type="match status" value="1"/>
</dbReference>
<dbReference type="NCBIfam" id="TIGR03775">
    <property type="entry name" value="RPE3"/>
    <property type="match status" value="1"/>
</dbReference>
<dbReference type="PANTHER" id="PTHR30372">
    <property type="entry name" value="LIPID-A-DISACCHARIDE SYNTHASE"/>
    <property type="match status" value="1"/>
</dbReference>
<dbReference type="PANTHER" id="PTHR30372:SF4">
    <property type="entry name" value="LIPID-A-DISACCHARIDE SYNTHASE, MITOCHONDRIAL-RELATED"/>
    <property type="match status" value="1"/>
</dbReference>
<dbReference type="Pfam" id="PF02684">
    <property type="entry name" value="LpxB"/>
    <property type="match status" value="1"/>
</dbReference>
<dbReference type="SUPFAM" id="SSF53756">
    <property type="entry name" value="UDP-Glycosyltransferase/glycogen phosphorylase"/>
    <property type="match status" value="1"/>
</dbReference>
<comment type="function">
    <text evidence="1">Condensation of UDP-2,3-diacylglucosamine and 2,3-diacylglucosamine-1-phosphate to form lipid A disaccharide, a precursor of lipid A, a phosphorylated glycolipid that anchors the lipopolysaccharide to the outer membrane of the cell.</text>
</comment>
<comment type="catalytic activity">
    <reaction>
        <text>a lipid X + a UDP-2-N,3-O-bis[(3R)-3-hydroxyacyl]-alpha-D-glucosamine = a lipid A disaccharide + UDP + H(+)</text>
        <dbReference type="Rhea" id="RHEA:67828"/>
        <dbReference type="ChEBI" id="CHEBI:15378"/>
        <dbReference type="ChEBI" id="CHEBI:58223"/>
        <dbReference type="ChEBI" id="CHEBI:137748"/>
        <dbReference type="ChEBI" id="CHEBI:176338"/>
        <dbReference type="ChEBI" id="CHEBI:176343"/>
        <dbReference type="EC" id="2.4.1.182"/>
    </reaction>
</comment>
<comment type="pathway">
    <text>Bacterial outer membrane biogenesis; LPS lipid A biosynthesis.</text>
</comment>
<comment type="similarity">
    <text evidence="2">Belongs to the LpxB family.</text>
</comment>
<protein>
    <recommendedName>
        <fullName>Lipid-A-disaccharide synthase</fullName>
        <ecNumber>2.4.1.182</ecNumber>
    </recommendedName>
</protein>
<keyword id="KW-0328">Glycosyltransferase</keyword>
<keyword id="KW-0441">Lipid A biosynthesis</keyword>
<keyword id="KW-0444">Lipid biosynthesis</keyword>
<keyword id="KW-0443">Lipid metabolism</keyword>
<keyword id="KW-0808">Transferase</keyword>
<accession>Q92II0</accession>
<feature type="chain" id="PRO_0000190181" description="Lipid-A-disaccharide synthase">
    <location>
        <begin position="1"/>
        <end position="446"/>
    </location>
</feature>
<feature type="domain" description="RPE3 insert">
    <location>
        <begin position="379"/>
        <end position="418"/>
    </location>
</feature>
<name>LPXB_RICCN</name>